<keyword id="KW-0007">Acetylation</keyword>
<keyword id="KW-0152">Cholesterol biosynthesis</keyword>
<keyword id="KW-0153">Cholesterol metabolism</keyword>
<keyword id="KW-0963">Cytoplasm</keyword>
<keyword id="KW-0903">Direct protein sequencing</keyword>
<keyword id="KW-0444">Lipid biosynthesis</keyword>
<keyword id="KW-0443">Lipid metabolism</keyword>
<keyword id="KW-0597">Phosphoprotein</keyword>
<keyword id="KW-1185">Reference proteome</keyword>
<keyword id="KW-0752">Steroid biosynthesis</keyword>
<keyword id="KW-0753">Steroid metabolism</keyword>
<keyword id="KW-0756">Sterol biosynthesis</keyword>
<keyword id="KW-1207">Sterol metabolism</keyword>
<keyword id="KW-0808">Transferase</keyword>
<accession>Q8JZK9</accession>
<accession>Q3UXI4</accession>
<proteinExistence type="evidence at protein level"/>
<feature type="chain" id="PRO_0000213748" description="Hydroxymethylglutaryl-CoA synthase, cytoplasmic">
    <location>
        <begin position="1"/>
        <end position="520"/>
    </location>
</feature>
<feature type="region of interest" description="Disordered" evidence="5">
    <location>
        <begin position="488"/>
        <end position="520"/>
    </location>
</feature>
<feature type="compositionally biased region" description="Polar residues" evidence="5">
    <location>
        <begin position="507"/>
        <end position="520"/>
    </location>
</feature>
<feature type="active site" description="Proton donor/acceptor" evidence="4">
    <location>
        <position position="95"/>
    </location>
</feature>
<feature type="active site" description="Acyl-thioester intermediate" evidence="4">
    <location>
        <position position="129"/>
    </location>
</feature>
<feature type="active site" description="Proton donor/acceptor" evidence="4">
    <location>
        <position position="264"/>
    </location>
</feature>
<feature type="binding site" evidence="2">
    <location>
        <position position="43"/>
    </location>
    <ligand>
        <name>(3S)-3-hydroxy-3-methylglutaryl-CoA</name>
        <dbReference type="ChEBI" id="CHEBI:43074"/>
    </ligand>
</feature>
<feature type="binding site" evidence="3">
    <location>
        <begin position="44"/>
        <end position="46"/>
    </location>
    <ligand>
        <name>CoA</name>
        <dbReference type="ChEBI" id="CHEBI:57287"/>
    </ligand>
</feature>
<feature type="binding site" evidence="2">
    <location>
        <position position="44"/>
    </location>
    <ligand>
        <name>(3S)-3-hydroxy-3-methylglutaryl-CoA</name>
        <dbReference type="ChEBI" id="CHEBI:43074"/>
    </ligand>
</feature>
<feature type="binding site" evidence="2">
    <location>
        <position position="129"/>
    </location>
    <ligand>
        <name>(3S)-3-hydroxy-3-methylglutaryl-CoA</name>
        <dbReference type="ChEBI" id="CHEBI:43074"/>
    </ligand>
</feature>
<feature type="binding site" evidence="2">
    <location>
        <position position="167"/>
    </location>
    <ligand>
        <name>(3S)-3-hydroxy-3-methylglutaryl-CoA</name>
        <dbReference type="ChEBI" id="CHEBI:43074"/>
    </ligand>
</feature>
<feature type="binding site" evidence="3">
    <location>
        <position position="167"/>
    </location>
    <ligand>
        <name>CoA</name>
        <dbReference type="ChEBI" id="CHEBI:57287"/>
    </ligand>
</feature>
<feature type="binding site" evidence="2">
    <location>
        <position position="171"/>
    </location>
    <ligand>
        <name>(3S)-3-hydroxy-3-methylglutaryl-CoA</name>
        <dbReference type="ChEBI" id="CHEBI:43074"/>
    </ligand>
</feature>
<feature type="binding site" evidence="2">
    <location>
        <position position="221"/>
    </location>
    <ligand>
        <name>(3S)-3-hydroxy-3-methylglutaryl-CoA</name>
        <dbReference type="ChEBI" id="CHEBI:43074"/>
    </ligand>
</feature>
<feature type="binding site" evidence="3">
    <location>
        <position position="221"/>
    </location>
    <ligand>
        <name>CoA</name>
        <dbReference type="ChEBI" id="CHEBI:57287"/>
    </ligand>
</feature>
<feature type="binding site" evidence="2">
    <location>
        <position position="264"/>
    </location>
    <ligand>
        <name>(3S)-3-hydroxy-3-methylglutaryl-CoA</name>
        <dbReference type="ChEBI" id="CHEBI:43074"/>
    </ligand>
</feature>
<feature type="binding site" evidence="3">
    <location>
        <position position="269"/>
    </location>
    <ligand>
        <name>CoA</name>
        <dbReference type="ChEBI" id="CHEBI:57287"/>
    </ligand>
</feature>
<feature type="binding site" evidence="2">
    <location>
        <position position="273"/>
    </location>
    <ligand>
        <name>(3S)-3-hydroxy-3-methylglutaryl-CoA</name>
        <dbReference type="ChEBI" id="CHEBI:43074"/>
    </ligand>
</feature>
<feature type="binding site" evidence="3">
    <location>
        <position position="273"/>
    </location>
    <ligand>
        <name>CoA</name>
        <dbReference type="ChEBI" id="CHEBI:57287"/>
    </ligand>
</feature>
<feature type="binding site" evidence="2">
    <location>
        <position position="343"/>
    </location>
    <ligand>
        <name>(3S)-3-hydroxy-3-methylglutaryl-CoA</name>
        <dbReference type="ChEBI" id="CHEBI:43074"/>
    </ligand>
</feature>
<feature type="binding site" evidence="2">
    <location>
        <position position="377"/>
    </location>
    <ligand>
        <name>(3S)-3-hydroxy-3-methylglutaryl-CoA</name>
        <dbReference type="ChEBI" id="CHEBI:43074"/>
    </ligand>
</feature>
<feature type="modified residue" description="Phosphoserine" evidence="3">
    <location>
        <position position="4"/>
    </location>
</feature>
<feature type="modified residue" description="N6-acetyllysine" evidence="3">
    <location>
        <position position="46"/>
    </location>
</feature>
<feature type="modified residue" description="N6-acetyllysine" evidence="3">
    <location>
        <position position="273"/>
    </location>
</feature>
<feature type="modified residue" description="Phosphoserine" evidence="8 9">
    <location>
        <position position="495"/>
    </location>
</feature>
<feature type="modified residue" description="Phosphoserine" evidence="3">
    <location>
        <position position="516"/>
    </location>
</feature>
<evidence type="ECO:0000250" key="1">
    <source>
        <dbReference type="UniProtKB" id="P13704"/>
    </source>
</evidence>
<evidence type="ECO:0000250" key="2">
    <source>
        <dbReference type="UniProtKB" id="P54868"/>
    </source>
</evidence>
<evidence type="ECO:0000250" key="3">
    <source>
        <dbReference type="UniProtKB" id="Q01581"/>
    </source>
</evidence>
<evidence type="ECO:0000255" key="4">
    <source>
        <dbReference type="PROSITE-ProRule" id="PRU10116"/>
    </source>
</evidence>
<evidence type="ECO:0000256" key="5">
    <source>
        <dbReference type="SAM" id="MobiDB-lite"/>
    </source>
</evidence>
<evidence type="ECO:0000305" key="6"/>
<evidence type="ECO:0000312" key="7">
    <source>
        <dbReference type="MGI" id="MGI:107592"/>
    </source>
</evidence>
<evidence type="ECO:0007744" key="8">
    <source>
    </source>
</evidence>
<evidence type="ECO:0007744" key="9">
    <source>
    </source>
</evidence>
<sequence>MPGSLPLNAEACWPKDVGIVALEIYFPSQYVDQAELEKYDGVDAGKYTIGLGQARMGFCTDREDINSLCLTVVQKLMERHSLSYDCIGRLEVGTETIIDKSKSVKSNLMQLFEESGNTDIEGIDTTNACYGGTAAVFNAVNWVESSSWDGRYALVVAGDIAIYATGNARPTGGVGAVALLIGPNAPLIFDRGLRGTHMQHAYDFYKPDMLSEYPVVDGKLSIQCYLSALDRCYSVYRKKIRAQWQKEGKDKDFTLNDFGFMIFHSPYCKLVQKSLARMFLNDFLNDQNRDKNSIYSGLEAFGDVKLEDTYFDRDVEKAFMKASSELFNQKTKASLLVSNQNGNMYTSSVYGSLASVLAQYSPQQLAGKRVGVFSYGSGLAATLYSLKVTQDATPGSALDKITASLCDLKSRLDSRTCVAPDVFAENMKLREDTHHLANYIPQCSIDSLFEGTWYLVRVDEKHRRTYARRPFTNDHSLDEGMGLVHSNTATEHIPSPAKKVPRLPATSAESESAVISNGEH</sequence>
<dbReference type="EC" id="2.3.3.10" evidence="3"/>
<dbReference type="EMBL" id="BC023851">
    <property type="protein sequence ID" value="AAH23851.1"/>
    <property type="molecule type" value="mRNA"/>
</dbReference>
<dbReference type="EMBL" id="BC029693">
    <property type="protein sequence ID" value="AAH29693.1"/>
    <property type="molecule type" value="mRNA"/>
</dbReference>
<dbReference type="EMBL" id="BC034317">
    <property type="protein sequence ID" value="AAH34317.1"/>
    <property type="molecule type" value="mRNA"/>
</dbReference>
<dbReference type="EMBL" id="AK031297">
    <property type="protein sequence ID" value="BAC27338.1"/>
    <property type="molecule type" value="mRNA"/>
</dbReference>
<dbReference type="EMBL" id="AK044835">
    <property type="protein sequence ID" value="BAC32112.1"/>
    <property type="molecule type" value="mRNA"/>
</dbReference>
<dbReference type="EMBL" id="AK045094">
    <property type="protein sequence ID" value="BAC32218.1"/>
    <property type="molecule type" value="mRNA"/>
</dbReference>
<dbReference type="EMBL" id="AK135551">
    <property type="protein sequence ID" value="BAE22579.1"/>
    <property type="molecule type" value="mRNA"/>
</dbReference>
<dbReference type="CCDS" id="CCDS56901.1"/>
<dbReference type="RefSeq" id="NP_001278368.1">
    <property type="nucleotide sequence ID" value="NM_001291439.1"/>
</dbReference>
<dbReference type="RefSeq" id="NP_666054.2">
    <property type="nucleotide sequence ID" value="NM_145942.5"/>
</dbReference>
<dbReference type="RefSeq" id="XP_006517641.1">
    <property type="nucleotide sequence ID" value="XM_006517578.3"/>
</dbReference>
<dbReference type="SMR" id="Q8JZK9"/>
<dbReference type="BioGRID" id="229007">
    <property type="interactions" value="7"/>
</dbReference>
<dbReference type="FunCoup" id="Q8JZK9">
    <property type="interactions" value="1672"/>
</dbReference>
<dbReference type="IntAct" id="Q8JZK9">
    <property type="interactions" value="1"/>
</dbReference>
<dbReference type="STRING" id="10090.ENSMUSP00000153064"/>
<dbReference type="GlyGen" id="Q8JZK9">
    <property type="glycosylation" value="4 sites, 1 O-linked glycan (3 sites)"/>
</dbReference>
<dbReference type="iPTMnet" id="Q8JZK9"/>
<dbReference type="PhosphoSitePlus" id="Q8JZK9"/>
<dbReference type="SwissPalm" id="Q8JZK9"/>
<dbReference type="REPRODUCTION-2DPAGE" id="Q8JZK9"/>
<dbReference type="jPOST" id="Q8JZK9"/>
<dbReference type="PaxDb" id="10090-ENSMUSP00000136944"/>
<dbReference type="ProteomicsDB" id="269603"/>
<dbReference type="Pumba" id="Q8JZK9"/>
<dbReference type="Antibodypedia" id="23240">
    <property type="antibodies" value="237 antibodies from 32 providers"/>
</dbReference>
<dbReference type="DNASU" id="208715"/>
<dbReference type="Ensembl" id="ENSMUST00000179869.3">
    <property type="protein sequence ID" value="ENSMUSP00000136944.2"/>
    <property type="gene ID" value="ENSMUSG00000093930.3"/>
</dbReference>
<dbReference type="GeneID" id="208715"/>
<dbReference type="KEGG" id="mmu:208715"/>
<dbReference type="UCSC" id="uc007rzv.2">
    <property type="organism name" value="mouse"/>
</dbReference>
<dbReference type="AGR" id="MGI:107592"/>
<dbReference type="CTD" id="3157"/>
<dbReference type="MGI" id="MGI:107592">
    <property type="gene designation" value="Hmgcs1"/>
</dbReference>
<dbReference type="VEuPathDB" id="HostDB:ENSMUSG00000093930"/>
<dbReference type="eggNOG" id="KOG1393">
    <property type="taxonomic scope" value="Eukaryota"/>
</dbReference>
<dbReference type="GeneTree" id="ENSGT00390000006096"/>
<dbReference type="HOGENOM" id="CLU_008065_0_1_1"/>
<dbReference type="InParanoid" id="Q8JZK9"/>
<dbReference type="OMA" id="DDAYNWI"/>
<dbReference type="OrthoDB" id="1269963at2759"/>
<dbReference type="PhylomeDB" id="Q8JZK9"/>
<dbReference type="TreeFam" id="TF105361"/>
<dbReference type="Reactome" id="R-MMU-191273">
    <property type="pathway name" value="Cholesterol biosynthesis"/>
</dbReference>
<dbReference type="UniPathway" id="UPA00058">
    <property type="reaction ID" value="UER00102"/>
</dbReference>
<dbReference type="BioGRID-ORCS" id="208715">
    <property type="hits" value="27 hits in 78 CRISPR screens"/>
</dbReference>
<dbReference type="ChiTaRS" id="Hmgcs1">
    <property type="organism name" value="mouse"/>
</dbReference>
<dbReference type="PRO" id="PR:Q8JZK9"/>
<dbReference type="Proteomes" id="UP000000589">
    <property type="component" value="Chromosome 13"/>
</dbReference>
<dbReference type="RNAct" id="Q8JZK9">
    <property type="molecule type" value="protein"/>
</dbReference>
<dbReference type="Bgee" id="ENSMUSG00000093930">
    <property type="expression patterns" value="Expressed in metanephric proximal tubule and 264 other cell types or tissues"/>
</dbReference>
<dbReference type="ExpressionAtlas" id="Q8JZK9">
    <property type="expression patterns" value="baseline and differential"/>
</dbReference>
<dbReference type="GO" id="GO:0005737">
    <property type="term" value="C:cytoplasm"/>
    <property type="evidence" value="ECO:0007669"/>
    <property type="project" value="UniProtKB-SubCell"/>
</dbReference>
<dbReference type="GO" id="GO:0004421">
    <property type="term" value="F:hydroxymethylglutaryl-CoA synthase activity"/>
    <property type="evidence" value="ECO:0007669"/>
    <property type="project" value="UniProtKB-EC"/>
</dbReference>
<dbReference type="GO" id="GO:0042803">
    <property type="term" value="F:protein homodimerization activity"/>
    <property type="evidence" value="ECO:0000250"/>
    <property type="project" value="UniProtKB"/>
</dbReference>
<dbReference type="GO" id="GO:0006084">
    <property type="term" value="P:acetyl-CoA metabolic process"/>
    <property type="evidence" value="ECO:0007669"/>
    <property type="project" value="InterPro"/>
</dbReference>
<dbReference type="GO" id="GO:0006695">
    <property type="term" value="P:cholesterol biosynthetic process"/>
    <property type="evidence" value="ECO:0007669"/>
    <property type="project" value="UniProtKB-KW"/>
</dbReference>
<dbReference type="GO" id="GO:0010142">
    <property type="term" value="P:farnesyl diphosphate biosynthetic process, mevalonate pathway"/>
    <property type="evidence" value="ECO:0007669"/>
    <property type="project" value="InterPro"/>
</dbReference>
<dbReference type="CDD" id="cd00827">
    <property type="entry name" value="init_cond_enzymes"/>
    <property type="match status" value="1"/>
</dbReference>
<dbReference type="FunFam" id="3.40.47.10:FF:000008">
    <property type="entry name" value="3-hydroxy-3-methylglutaryl coenzyme A synthase"/>
    <property type="match status" value="1"/>
</dbReference>
<dbReference type="Gene3D" id="3.40.47.10">
    <property type="match status" value="1"/>
</dbReference>
<dbReference type="InterPro" id="IPR000590">
    <property type="entry name" value="HMG_CoA_synt_AS"/>
</dbReference>
<dbReference type="InterPro" id="IPR013746">
    <property type="entry name" value="HMG_CoA_synt_C_dom"/>
</dbReference>
<dbReference type="InterPro" id="IPR013528">
    <property type="entry name" value="HMG_CoA_synth_N"/>
</dbReference>
<dbReference type="InterPro" id="IPR010122">
    <property type="entry name" value="HMG_CoA_synthase_euk"/>
</dbReference>
<dbReference type="InterPro" id="IPR016039">
    <property type="entry name" value="Thiolase-like"/>
</dbReference>
<dbReference type="NCBIfam" id="TIGR01833">
    <property type="entry name" value="HMG-CoA-S_euk"/>
    <property type="match status" value="1"/>
</dbReference>
<dbReference type="PANTHER" id="PTHR43323">
    <property type="entry name" value="3-HYDROXY-3-METHYLGLUTARYL COENZYME A SYNTHASE"/>
    <property type="match status" value="1"/>
</dbReference>
<dbReference type="PANTHER" id="PTHR43323:SF4">
    <property type="entry name" value="HYDROXYMETHYLGLUTARYL-COA SYNTHASE, CYTOPLASMIC"/>
    <property type="match status" value="1"/>
</dbReference>
<dbReference type="Pfam" id="PF08540">
    <property type="entry name" value="HMG_CoA_synt_C"/>
    <property type="match status" value="1"/>
</dbReference>
<dbReference type="Pfam" id="PF01154">
    <property type="entry name" value="HMG_CoA_synt_N"/>
    <property type="match status" value="1"/>
</dbReference>
<dbReference type="SUPFAM" id="SSF53901">
    <property type="entry name" value="Thiolase-like"/>
    <property type="match status" value="2"/>
</dbReference>
<dbReference type="PROSITE" id="PS01226">
    <property type="entry name" value="HMG_COA_SYNTHASE"/>
    <property type="match status" value="1"/>
</dbReference>
<gene>
    <name evidence="7" type="primary">Hmgcs1</name>
</gene>
<protein>
    <recommendedName>
        <fullName evidence="6">Hydroxymethylglutaryl-CoA synthase, cytoplasmic</fullName>
        <shortName evidence="3">HMG-CoA synthase</shortName>
        <ecNumber evidence="3">2.3.3.10</ecNumber>
    </recommendedName>
    <alternativeName>
        <fullName>3-hydroxy-3-methylglutaryl coenzyme A synthase</fullName>
    </alternativeName>
</protein>
<organism>
    <name type="scientific">Mus musculus</name>
    <name type="common">Mouse</name>
    <dbReference type="NCBI Taxonomy" id="10090"/>
    <lineage>
        <taxon>Eukaryota</taxon>
        <taxon>Metazoa</taxon>
        <taxon>Chordata</taxon>
        <taxon>Craniata</taxon>
        <taxon>Vertebrata</taxon>
        <taxon>Euteleostomi</taxon>
        <taxon>Mammalia</taxon>
        <taxon>Eutheria</taxon>
        <taxon>Euarchontoglires</taxon>
        <taxon>Glires</taxon>
        <taxon>Rodentia</taxon>
        <taxon>Myomorpha</taxon>
        <taxon>Muroidea</taxon>
        <taxon>Muridae</taxon>
        <taxon>Murinae</taxon>
        <taxon>Mus</taxon>
        <taxon>Mus</taxon>
    </lineage>
</organism>
<comment type="function">
    <text evidence="1">Catalyzes the condensation of acetyl-CoA with acetoacetyl-CoA to form HMG-CoA, which is converted by HMG-CoA reductase (HMGCR) into mevalonate, a precursor for cholesterol synthesis.</text>
</comment>
<comment type="catalytic activity">
    <reaction evidence="3">
        <text>acetoacetyl-CoA + acetyl-CoA + H2O = (3S)-3-hydroxy-3-methylglutaryl-CoA + CoA + H(+)</text>
        <dbReference type="Rhea" id="RHEA:10188"/>
        <dbReference type="ChEBI" id="CHEBI:15377"/>
        <dbReference type="ChEBI" id="CHEBI:15378"/>
        <dbReference type="ChEBI" id="CHEBI:43074"/>
        <dbReference type="ChEBI" id="CHEBI:57286"/>
        <dbReference type="ChEBI" id="CHEBI:57287"/>
        <dbReference type="ChEBI" id="CHEBI:57288"/>
        <dbReference type="EC" id="2.3.3.10"/>
    </reaction>
    <physiologicalReaction direction="left-to-right" evidence="3">
        <dbReference type="Rhea" id="RHEA:10189"/>
    </physiologicalReaction>
</comment>
<comment type="pathway">
    <text>Metabolic intermediate biosynthesis; (R)-mevalonate biosynthesis; (R)-mevalonate from acetyl-CoA: step 2/3.</text>
</comment>
<comment type="subunit">
    <text evidence="3">Homodimer.</text>
</comment>
<comment type="subcellular location">
    <subcellularLocation>
        <location evidence="1">Cytoplasm</location>
    </subcellularLocation>
</comment>
<comment type="similarity">
    <text evidence="6">Belongs to the thiolase-like superfamily. HMG-CoA synthase family.</text>
</comment>
<reference key="1">
    <citation type="journal article" date="2005" name="Science">
        <title>The transcriptional landscape of the mammalian genome.</title>
        <authorList>
            <person name="Carninci P."/>
            <person name="Kasukawa T."/>
            <person name="Katayama S."/>
            <person name="Gough J."/>
            <person name="Frith M.C."/>
            <person name="Maeda N."/>
            <person name="Oyama R."/>
            <person name="Ravasi T."/>
            <person name="Lenhard B."/>
            <person name="Wells C."/>
            <person name="Kodzius R."/>
            <person name="Shimokawa K."/>
            <person name="Bajic V.B."/>
            <person name="Brenner S.E."/>
            <person name="Batalov S."/>
            <person name="Forrest A.R."/>
            <person name="Zavolan M."/>
            <person name="Davis M.J."/>
            <person name="Wilming L.G."/>
            <person name="Aidinis V."/>
            <person name="Allen J.E."/>
            <person name="Ambesi-Impiombato A."/>
            <person name="Apweiler R."/>
            <person name="Aturaliya R.N."/>
            <person name="Bailey T.L."/>
            <person name="Bansal M."/>
            <person name="Baxter L."/>
            <person name="Beisel K.W."/>
            <person name="Bersano T."/>
            <person name="Bono H."/>
            <person name="Chalk A.M."/>
            <person name="Chiu K.P."/>
            <person name="Choudhary V."/>
            <person name="Christoffels A."/>
            <person name="Clutterbuck D.R."/>
            <person name="Crowe M.L."/>
            <person name="Dalla E."/>
            <person name="Dalrymple B.P."/>
            <person name="de Bono B."/>
            <person name="Della Gatta G."/>
            <person name="di Bernardo D."/>
            <person name="Down T."/>
            <person name="Engstrom P."/>
            <person name="Fagiolini M."/>
            <person name="Faulkner G."/>
            <person name="Fletcher C.F."/>
            <person name="Fukushima T."/>
            <person name="Furuno M."/>
            <person name="Futaki S."/>
            <person name="Gariboldi M."/>
            <person name="Georgii-Hemming P."/>
            <person name="Gingeras T.R."/>
            <person name="Gojobori T."/>
            <person name="Green R.E."/>
            <person name="Gustincich S."/>
            <person name="Harbers M."/>
            <person name="Hayashi Y."/>
            <person name="Hensch T.K."/>
            <person name="Hirokawa N."/>
            <person name="Hill D."/>
            <person name="Huminiecki L."/>
            <person name="Iacono M."/>
            <person name="Ikeo K."/>
            <person name="Iwama A."/>
            <person name="Ishikawa T."/>
            <person name="Jakt M."/>
            <person name="Kanapin A."/>
            <person name="Katoh M."/>
            <person name="Kawasawa Y."/>
            <person name="Kelso J."/>
            <person name="Kitamura H."/>
            <person name="Kitano H."/>
            <person name="Kollias G."/>
            <person name="Krishnan S.P."/>
            <person name="Kruger A."/>
            <person name="Kummerfeld S.K."/>
            <person name="Kurochkin I.V."/>
            <person name="Lareau L.F."/>
            <person name="Lazarevic D."/>
            <person name="Lipovich L."/>
            <person name="Liu J."/>
            <person name="Liuni S."/>
            <person name="McWilliam S."/>
            <person name="Madan Babu M."/>
            <person name="Madera M."/>
            <person name="Marchionni L."/>
            <person name="Matsuda H."/>
            <person name="Matsuzawa S."/>
            <person name="Miki H."/>
            <person name="Mignone F."/>
            <person name="Miyake S."/>
            <person name="Morris K."/>
            <person name="Mottagui-Tabar S."/>
            <person name="Mulder N."/>
            <person name="Nakano N."/>
            <person name="Nakauchi H."/>
            <person name="Ng P."/>
            <person name="Nilsson R."/>
            <person name="Nishiguchi S."/>
            <person name="Nishikawa S."/>
            <person name="Nori F."/>
            <person name="Ohara O."/>
            <person name="Okazaki Y."/>
            <person name="Orlando V."/>
            <person name="Pang K.C."/>
            <person name="Pavan W.J."/>
            <person name="Pavesi G."/>
            <person name="Pesole G."/>
            <person name="Petrovsky N."/>
            <person name="Piazza S."/>
            <person name="Reed J."/>
            <person name="Reid J.F."/>
            <person name="Ring B.Z."/>
            <person name="Ringwald M."/>
            <person name="Rost B."/>
            <person name="Ruan Y."/>
            <person name="Salzberg S.L."/>
            <person name="Sandelin A."/>
            <person name="Schneider C."/>
            <person name="Schoenbach C."/>
            <person name="Sekiguchi K."/>
            <person name="Semple C.A."/>
            <person name="Seno S."/>
            <person name="Sessa L."/>
            <person name="Sheng Y."/>
            <person name="Shibata Y."/>
            <person name="Shimada H."/>
            <person name="Shimada K."/>
            <person name="Silva D."/>
            <person name="Sinclair B."/>
            <person name="Sperling S."/>
            <person name="Stupka E."/>
            <person name="Sugiura K."/>
            <person name="Sultana R."/>
            <person name="Takenaka Y."/>
            <person name="Taki K."/>
            <person name="Tammoja K."/>
            <person name="Tan S.L."/>
            <person name="Tang S."/>
            <person name="Taylor M.S."/>
            <person name="Tegner J."/>
            <person name="Teichmann S.A."/>
            <person name="Ueda H.R."/>
            <person name="van Nimwegen E."/>
            <person name="Verardo R."/>
            <person name="Wei C.L."/>
            <person name="Yagi K."/>
            <person name="Yamanishi H."/>
            <person name="Zabarovsky E."/>
            <person name="Zhu S."/>
            <person name="Zimmer A."/>
            <person name="Hide W."/>
            <person name="Bult C."/>
            <person name="Grimmond S.M."/>
            <person name="Teasdale R.D."/>
            <person name="Liu E.T."/>
            <person name="Brusic V."/>
            <person name="Quackenbush J."/>
            <person name="Wahlestedt C."/>
            <person name="Mattick J.S."/>
            <person name="Hume D.A."/>
            <person name="Kai C."/>
            <person name="Sasaki D."/>
            <person name="Tomaru Y."/>
            <person name="Fukuda S."/>
            <person name="Kanamori-Katayama M."/>
            <person name="Suzuki M."/>
            <person name="Aoki J."/>
            <person name="Arakawa T."/>
            <person name="Iida J."/>
            <person name="Imamura K."/>
            <person name="Itoh M."/>
            <person name="Kato T."/>
            <person name="Kawaji H."/>
            <person name="Kawagashira N."/>
            <person name="Kawashima T."/>
            <person name="Kojima M."/>
            <person name="Kondo S."/>
            <person name="Konno H."/>
            <person name="Nakano K."/>
            <person name="Ninomiya N."/>
            <person name="Nishio T."/>
            <person name="Okada M."/>
            <person name="Plessy C."/>
            <person name="Shibata K."/>
            <person name="Shiraki T."/>
            <person name="Suzuki S."/>
            <person name="Tagami M."/>
            <person name="Waki K."/>
            <person name="Watahiki A."/>
            <person name="Okamura-Oho Y."/>
            <person name="Suzuki H."/>
            <person name="Kawai J."/>
            <person name="Hayashizaki Y."/>
        </authorList>
    </citation>
    <scope>NUCLEOTIDE SEQUENCE [LARGE SCALE MRNA]</scope>
    <source>
        <strain>C57BL/6J</strain>
        <tissue>Muellerian duct</tissue>
        <tissue>Testis</tissue>
    </source>
</reference>
<reference key="2">
    <citation type="journal article" date="2004" name="Genome Res.">
        <title>The status, quality, and expansion of the NIH full-length cDNA project: the Mammalian Gene Collection (MGC).</title>
        <authorList>
            <consortium name="The MGC Project Team"/>
        </authorList>
    </citation>
    <scope>NUCLEOTIDE SEQUENCE [LARGE SCALE MRNA]</scope>
    <source>
        <strain>FVB/N</strain>
        <strain>FVB/N-3</strain>
        <tissue>Eye</tissue>
        <tissue>Mammary tumor</tissue>
    </source>
</reference>
<reference key="3">
    <citation type="submission" date="2009-01" db="UniProtKB">
        <authorList>
            <person name="Lubec G."/>
            <person name="Sunyer B."/>
            <person name="Chen W.-Q."/>
        </authorList>
    </citation>
    <scope>PROTEIN SEQUENCE OF 47-75; 90-100; 220-231; 278-289; 292-313; 322-330; 370-409; 416-428 AND 469-498</scope>
    <scope>IDENTIFICATION BY MASS SPECTROMETRY</scope>
    <source>
        <strain>OF1</strain>
        <tissue>Hippocampus</tissue>
    </source>
</reference>
<reference key="4">
    <citation type="journal article" date="2004" name="Mol. Cell. Proteomics">
        <title>Phosphoproteomic analysis of the developing mouse brain.</title>
        <authorList>
            <person name="Ballif B.A."/>
            <person name="Villen J."/>
            <person name="Beausoleil S.A."/>
            <person name="Schwartz D."/>
            <person name="Gygi S.P."/>
        </authorList>
    </citation>
    <scope>IDENTIFICATION BY MASS SPECTROMETRY [LARGE SCALE ANALYSIS]</scope>
    <source>
        <tissue>Embryonic brain</tissue>
    </source>
</reference>
<reference key="5">
    <citation type="journal article" date="2007" name="Proc. Natl. Acad. Sci. U.S.A.">
        <title>Large-scale phosphorylation analysis of mouse liver.</title>
        <authorList>
            <person name="Villen J."/>
            <person name="Beausoleil S.A."/>
            <person name="Gerber S.A."/>
            <person name="Gygi S.P."/>
        </authorList>
    </citation>
    <scope>PHOSPHORYLATION [LARGE SCALE ANALYSIS] AT SER-495</scope>
    <scope>IDENTIFICATION BY MASS SPECTROMETRY [LARGE SCALE ANALYSIS]</scope>
    <source>
        <tissue>Liver</tissue>
    </source>
</reference>
<reference key="6">
    <citation type="journal article" date="2010" name="Cell">
        <title>A tissue-specific atlas of mouse protein phosphorylation and expression.</title>
        <authorList>
            <person name="Huttlin E.L."/>
            <person name="Jedrychowski M.P."/>
            <person name="Elias J.E."/>
            <person name="Goswami T."/>
            <person name="Rad R."/>
            <person name="Beausoleil S.A."/>
            <person name="Villen J."/>
            <person name="Haas W."/>
            <person name="Sowa M.E."/>
            <person name="Gygi S.P."/>
        </authorList>
    </citation>
    <scope>PHOSPHORYLATION [LARGE SCALE ANALYSIS] AT SER-495</scope>
    <scope>IDENTIFICATION BY MASS SPECTROMETRY [LARGE SCALE ANALYSIS]</scope>
    <source>
        <tissue>Brain</tissue>
        <tissue>Brown adipose tissue</tissue>
        <tissue>Kidney</tissue>
        <tissue>Liver</tissue>
        <tissue>Lung</tissue>
        <tissue>Spleen</tissue>
        <tissue>Testis</tissue>
    </source>
</reference>
<name>HMCS1_MOUSE</name>